<reference key="1">
    <citation type="journal article" date="2007" name="PLoS Genet.">
        <title>Patterns and implications of gene gain and loss in the evolution of Prochlorococcus.</title>
        <authorList>
            <person name="Kettler G.C."/>
            <person name="Martiny A.C."/>
            <person name="Huang K."/>
            <person name="Zucker J."/>
            <person name="Coleman M.L."/>
            <person name="Rodrigue S."/>
            <person name="Chen F."/>
            <person name="Lapidus A."/>
            <person name="Ferriera S."/>
            <person name="Johnson J."/>
            <person name="Steglich C."/>
            <person name="Church G.M."/>
            <person name="Richardson P."/>
            <person name="Chisholm S.W."/>
        </authorList>
    </citation>
    <scope>NUCLEOTIDE SEQUENCE [LARGE SCALE GENOMIC DNA]</scope>
    <source>
        <strain>MIT 9515</strain>
    </source>
</reference>
<sequence>MLKANRLSIYAIGKIKKKWIREGINQYKKRMPDLIINESKSFNIDNIRVNNIIICLTEEGKSFSSTELTSLLLNFKNKKINFLIGDADGIPSDIKDKSHLLLSLSPLTFPHELARLILVEQIYRVISISNGSPYHRA</sequence>
<comment type="function">
    <text evidence="1">Specifically methylates the pseudouridine at position 1915 (m3Psi1915) in 23S rRNA.</text>
</comment>
<comment type="catalytic activity">
    <reaction evidence="1">
        <text>pseudouridine(1915) in 23S rRNA + S-adenosyl-L-methionine = N(3)-methylpseudouridine(1915) in 23S rRNA + S-adenosyl-L-homocysteine + H(+)</text>
        <dbReference type="Rhea" id="RHEA:42752"/>
        <dbReference type="Rhea" id="RHEA-COMP:10221"/>
        <dbReference type="Rhea" id="RHEA-COMP:10222"/>
        <dbReference type="ChEBI" id="CHEBI:15378"/>
        <dbReference type="ChEBI" id="CHEBI:57856"/>
        <dbReference type="ChEBI" id="CHEBI:59789"/>
        <dbReference type="ChEBI" id="CHEBI:65314"/>
        <dbReference type="ChEBI" id="CHEBI:74486"/>
        <dbReference type="EC" id="2.1.1.177"/>
    </reaction>
</comment>
<comment type="subunit">
    <text evidence="1">Homodimer.</text>
</comment>
<comment type="subcellular location">
    <subcellularLocation>
        <location evidence="1">Cytoplasm</location>
    </subcellularLocation>
</comment>
<comment type="similarity">
    <text evidence="1">Belongs to the RNA methyltransferase RlmH family.</text>
</comment>
<dbReference type="EC" id="2.1.1.177" evidence="1"/>
<dbReference type="EMBL" id="CP000552">
    <property type="protein sequence ID" value="ABM72225.1"/>
    <property type="molecule type" value="Genomic_DNA"/>
</dbReference>
<dbReference type="RefSeq" id="WP_011820326.1">
    <property type="nucleotide sequence ID" value="NC_008817.1"/>
</dbReference>
<dbReference type="SMR" id="A2BWR4"/>
<dbReference type="STRING" id="167542.P9515_10181"/>
<dbReference type="GeneID" id="60201786"/>
<dbReference type="KEGG" id="pmc:P9515_10181"/>
<dbReference type="eggNOG" id="COG1576">
    <property type="taxonomic scope" value="Bacteria"/>
</dbReference>
<dbReference type="HOGENOM" id="CLU_100552_2_0_3"/>
<dbReference type="OrthoDB" id="9806643at2"/>
<dbReference type="Proteomes" id="UP000001589">
    <property type="component" value="Chromosome"/>
</dbReference>
<dbReference type="GO" id="GO:0005737">
    <property type="term" value="C:cytoplasm"/>
    <property type="evidence" value="ECO:0007669"/>
    <property type="project" value="UniProtKB-SubCell"/>
</dbReference>
<dbReference type="GO" id="GO:0070038">
    <property type="term" value="F:rRNA (pseudouridine-N3-)-methyltransferase activity"/>
    <property type="evidence" value="ECO:0007669"/>
    <property type="project" value="UniProtKB-UniRule"/>
</dbReference>
<dbReference type="CDD" id="cd18081">
    <property type="entry name" value="RlmH-like"/>
    <property type="match status" value="1"/>
</dbReference>
<dbReference type="Gene3D" id="3.40.1280.10">
    <property type="match status" value="1"/>
</dbReference>
<dbReference type="HAMAP" id="MF_00658">
    <property type="entry name" value="23SrRNA_methyltr_H"/>
    <property type="match status" value="1"/>
</dbReference>
<dbReference type="InterPro" id="IPR029028">
    <property type="entry name" value="Alpha/beta_knot_MTases"/>
</dbReference>
<dbReference type="InterPro" id="IPR001936">
    <property type="entry name" value="RasGAP_dom"/>
</dbReference>
<dbReference type="InterPro" id="IPR003742">
    <property type="entry name" value="RlmH-like"/>
</dbReference>
<dbReference type="InterPro" id="IPR029026">
    <property type="entry name" value="tRNA_m1G_MTases_N"/>
</dbReference>
<dbReference type="PANTHER" id="PTHR33603">
    <property type="entry name" value="METHYLTRANSFERASE"/>
    <property type="match status" value="1"/>
</dbReference>
<dbReference type="PANTHER" id="PTHR33603:SF1">
    <property type="entry name" value="RIBOSOMAL RNA LARGE SUBUNIT METHYLTRANSFERASE H"/>
    <property type="match status" value="1"/>
</dbReference>
<dbReference type="Pfam" id="PF02590">
    <property type="entry name" value="SPOUT_MTase"/>
    <property type="match status" value="1"/>
</dbReference>
<dbReference type="PIRSF" id="PIRSF004505">
    <property type="entry name" value="MT_bac"/>
    <property type="match status" value="1"/>
</dbReference>
<dbReference type="SUPFAM" id="SSF75217">
    <property type="entry name" value="alpha/beta knot"/>
    <property type="match status" value="1"/>
</dbReference>
<proteinExistence type="inferred from homology"/>
<organism>
    <name type="scientific">Prochlorococcus marinus (strain MIT 9515)</name>
    <dbReference type="NCBI Taxonomy" id="167542"/>
    <lineage>
        <taxon>Bacteria</taxon>
        <taxon>Bacillati</taxon>
        <taxon>Cyanobacteriota</taxon>
        <taxon>Cyanophyceae</taxon>
        <taxon>Synechococcales</taxon>
        <taxon>Prochlorococcaceae</taxon>
        <taxon>Prochlorococcus</taxon>
    </lineage>
</organism>
<feature type="chain" id="PRO_0000366639" description="Ribosomal RNA large subunit methyltransferase H">
    <location>
        <begin position="1"/>
        <end position="137"/>
    </location>
</feature>
<feature type="binding site" evidence="1">
    <location>
        <position position="56"/>
    </location>
    <ligand>
        <name>S-adenosyl-L-methionine</name>
        <dbReference type="ChEBI" id="CHEBI:59789"/>
    </ligand>
</feature>
<feature type="binding site" evidence="1">
    <location>
        <position position="85"/>
    </location>
    <ligand>
        <name>S-adenosyl-L-methionine</name>
        <dbReference type="ChEBI" id="CHEBI:59789"/>
    </ligand>
</feature>
<feature type="binding site" evidence="1">
    <location>
        <begin position="104"/>
        <end position="109"/>
    </location>
    <ligand>
        <name>S-adenosyl-L-methionine</name>
        <dbReference type="ChEBI" id="CHEBI:59789"/>
    </ligand>
</feature>
<keyword id="KW-0963">Cytoplasm</keyword>
<keyword id="KW-0489">Methyltransferase</keyword>
<keyword id="KW-0698">rRNA processing</keyword>
<keyword id="KW-0949">S-adenosyl-L-methionine</keyword>
<keyword id="KW-0808">Transferase</keyword>
<accession>A2BWR4</accession>
<protein>
    <recommendedName>
        <fullName evidence="1">Ribosomal RNA large subunit methyltransferase H</fullName>
        <ecNumber evidence="1">2.1.1.177</ecNumber>
    </recommendedName>
    <alternativeName>
        <fullName evidence="1">23S rRNA (pseudouridine1915-N3)-methyltransferase</fullName>
    </alternativeName>
    <alternativeName>
        <fullName evidence="1">23S rRNA m3Psi1915 methyltransferase</fullName>
    </alternativeName>
    <alternativeName>
        <fullName evidence="1">rRNA (pseudouridine-N3-)-methyltransferase RlmH</fullName>
    </alternativeName>
</protein>
<gene>
    <name evidence="1" type="primary">rlmH</name>
    <name type="ordered locus">P9515_10181</name>
</gene>
<name>RLMH_PROM5</name>
<evidence type="ECO:0000255" key="1">
    <source>
        <dbReference type="HAMAP-Rule" id="MF_00658"/>
    </source>
</evidence>